<sequence length="644" mass="72425">MFQDNPLLAQLKQQLHSQTPRAEGVVKATEKGFGFLEVDAQKSYFIPPPQMKKVMHGDRIVAVIHTEKERESAEPEELIEPFLTRFVGKVQGKNDRLSIVPDHPLLKDAIPCRAARGVQHEFKEGDWAVAEMRRHPLKGDRSFYADLTQYITFADDHFVPWWVTLARHNLEKEAPNGVATEMLDEGLERQDLTALNFVTIDSASTEDMDDALYAEELADGRLQLTVAIADPTAWIAEGSKLDNAAKIRAFTNYLPGFNIPMLPRELSDDLCSLRANEVRPALACRMIISADGTIDDDIAFFAATIESKAKLAYDNVSDWLENNGTWQPDNEGIAQQIRLLHRICLSRSEWRHHHALVFKDRPDYRFVLGEKGEVLDIVAEPRRIANRIVEESMIAANLCAARVLRDKLGFGIYNVHTGFDPANADALAALLKTHGLHVDAEEVLTLEGFCKLRRELDAQPSGFLDSRIRRFQSFAEISTEPGPHFGLGLEAYATWTSPIRKYGDMINHRLLKAVIKGEAIARPQEDITQQMAERRRLNRMAERDVGDWLYARFLNDKAGTNTRFAAEIIDVSRGGMRVRLVDNGAIAFIPAPFLHAVRDELVCSQENGTVQIKGETVYKVTDVIDVTIAEVRMETRSIIARPAA</sequence>
<comment type="function">
    <text evidence="2">Involved in mRNA degradation. Hydrolyzes single-stranded polyribonucleotides processively in the 3' to 5' direction.</text>
</comment>
<comment type="catalytic activity">
    <reaction evidence="2">
        <text>Exonucleolytic cleavage in the 3'- to 5'-direction to yield nucleoside 5'-phosphates.</text>
        <dbReference type="EC" id="3.1.13.1"/>
    </reaction>
</comment>
<comment type="subcellular location">
    <subcellularLocation>
        <location evidence="2">Cytoplasm</location>
    </subcellularLocation>
</comment>
<comment type="similarity">
    <text evidence="2">Belongs to the RNR ribonuclease family. RNase II subfamily.</text>
</comment>
<gene>
    <name evidence="2" type="primary">rnb</name>
    <name type="ordered locus">SeHA_C1887</name>
</gene>
<keyword id="KW-0963">Cytoplasm</keyword>
<keyword id="KW-0269">Exonuclease</keyword>
<keyword id="KW-0378">Hydrolase</keyword>
<keyword id="KW-0540">Nuclease</keyword>
<keyword id="KW-0694">RNA-binding</keyword>
<accession>B4TJI0</accession>
<feature type="chain" id="PRO_1000135877" description="Exoribonuclease 2">
    <location>
        <begin position="1"/>
        <end position="644"/>
    </location>
</feature>
<feature type="domain" description="RNB" evidence="1">
    <location>
        <begin position="189"/>
        <end position="516"/>
    </location>
</feature>
<feature type="domain" description="S1 motif" evidence="2">
    <location>
        <begin position="561"/>
        <end position="643"/>
    </location>
</feature>
<reference key="1">
    <citation type="journal article" date="2011" name="J. Bacteriol.">
        <title>Comparative genomics of 28 Salmonella enterica isolates: evidence for CRISPR-mediated adaptive sublineage evolution.</title>
        <authorList>
            <person name="Fricke W.F."/>
            <person name="Mammel M.K."/>
            <person name="McDermott P.F."/>
            <person name="Tartera C."/>
            <person name="White D.G."/>
            <person name="Leclerc J.E."/>
            <person name="Ravel J."/>
            <person name="Cebula T.A."/>
        </authorList>
    </citation>
    <scope>NUCLEOTIDE SEQUENCE [LARGE SCALE GENOMIC DNA]</scope>
    <source>
        <strain>SL476</strain>
    </source>
</reference>
<protein>
    <recommendedName>
        <fullName evidence="2">Exoribonuclease 2</fullName>
        <ecNumber evidence="2">3.1.13.1</ecNumber>
    </recommendedName>
    <alternativeName>
        <fullName evidence="2">Exoribonuclease II</fullName>
        <shortName evidence="2">RNase II</shortName>
        <shortName evidence="2">Ribonuclease II</shortName>
    </alternativeName>
</protein>
<dbReference type="EC" id="3.1.13.1" evidence="2"/>
<dbReference type="EMBL" id="CP001120">
    <property type="protein sequence ID" value="ACF68662.1"/>
    <property type="molecule type" value="Genomic_DNA"/>
</dbReference>
<dbReference type="RefSeq" id="WP_000485050.1">
    <property type="nucleotide sequence ID" value="NC_011083.1"/>
</dbReference>
<dbReference type="SMR" id="B4TJI0"/>
<dbReference type="KEGG" id="seh:SeHA_C1887"/>
<dbReference type="HOGENOM" id="CLU_002333_7_3_6"/>
<dbReference type="Proteomes" id="UP000001866">
    <property type="component" value="Chromosome"/>
</dbReference>
<dbReference type="GO" id="GO:0005829">
    <property type="term" value="C:cytosol"/>
    <property type="evidence" value="ECO:0007669"/>
    <property type="project" value="UniProtKB-ARBA"/>
</dbReference>
<dbReference type="GO" id="GO:0008859">
    <property type="term" value="F:exoribonuclease II activity"/>
    <property type="evidence" value="ECO:0007669"/>
    <property type="project" value="UniProtKB-UniRule"/>
</dbReference>
<dbReference type="GO" id="GO:0003723">
    <property type="term" value="F:RNA binding"/>
    <property type="evidence" value="ECO:0007669"/>
    <property type="project" value="UniProtKB-KW"/>
</dbReference>
<dbReference type="GO" id="GO:0006402">
    <property type="term" value="P:mRNA catabolic process"/>
    <property type="evidence" value="ECO:0007669"/>
    <property type="project" value="UniProtKB-UniRule"/>
</dbReference>
<dbReference type="FunFam" id="2.40.50.140:FF:000079">
    <property type="entry name" value="Exoribonuclease 2"/>
    <property type="match status" value="1"/>
</dbReference>
<dbReference type="FunFam" id="2.40.50.140:FF:000081">
    <property type="entry name" value="Exoribonuclease 2"/>
    <property type="match status" value="1"/>
</dbReference>
<dbReference type="FunFam" id="2.40.50.640:FF:000001">
    <property type="entry name" value="Exoribonuclease 2"/>
    <property type="match status" value="1"/>
</dbReference>
<dbReference type="Gene3D" id="2.40.50.640">
    <property type="match status" value="1"/>
</dbReference>
<dbReference type="Gene3D" id="2.40.50.140">
    <property type="entry name" value="Nucleic acid-binding proteins"/>
    <property type="match status" value="2"/>
</dbReference>
<dbReference type="HAMAP" id="MF_01036">
    <property type="entry name" value="RNase_II"/>
    <property type="match status" value="1"/>
</dbReference>
<dbReference type="InterPro" id="IPR011129">
    <property type="entry name" value="CSD"/>
</dbReference>
<dbReference type="InterPro" id="IPR012340">
    <property type="entry name" value="NA-bd_OB-fold"/>
</dbReference>
<dbReference type="InterPro" id="IPR013223">
    <property type="entry name" value="RNase_B_OB_dom"/>
</dbReference>
<dbReference type="InterPro" id="IPR011804">
    <property type="entry name" value="RNase_II"/>
</dbReference>
<dbReference type="InterPro" id="IPR001900">
    <property type="entry name" value="RNase_II/R"/>
</dbReference>
<dbReference type="InterPro" id="IPR022966">
    <property type="entry name" value="RNase_II/R_CS"/>
</dbReference>
<dbReference type="InterPro" id="IPR004476">
    <property type="entry name" value="RNase_II/RNase_R"/>
</dbReference>
<dbReference type="InterPro" id="IPR050180">
    <property type="entry name" value="RNR_Ribonuclease"/>
</dbReference>
<dbReference type="InterPro" id="IPR003029">
    <property type="entry name" value="S1_domain"/>
</dbReference>
<dbReference type="NCBIfam" id="TIGR00358">
    <property type="entry name" value="3_prime_RNase"/>
    <property type="match status" value="1"/>
</dbReference>
<dbReference type="NCBIfam" id="NF003455">
    <property type="entry name" value="PRK05054.1"/>
    <property type="match status" value="1"/>
</dbReference>
<dbReference type="NCBIfam" id="TIGR02062">
    <property type="entry name" value="RNase_B"/>
    <property type="match status" value="1"/>
</dbReference>
<dbReference type="PANTHER" id="PTHR23355:SF37">
    <property type="entry name" value="EXORIBONUCLEASE 2"/>
    <property type="match status" value="1"/>
</dbReference>
<dbReference type="PANTHER" id="PTHR23355">
    <property type="entry name" value="RIBONUCLEASE"/>
    <property type="match status" value="1"/>
</dbReference>
<dbReference type="Pfam" id="PF08206">
    <property type="entry name" value="OB_RNB"/>
    <property type="match status" value="1"/>
</dbReference>
<dbReference type="Pfam" id="PF00773">
    <property type="entry name" value="RNB"/>
    <property type="match status" value="1"/>
</dbReference>
<dbReference type="Pfam" id="PF00575">
    <property type="entry name" value="S1"/>
    <property type="match status" value="1"/>
</dbReference>
<dbReference type="SMART" id="SM00357">
    <property type="entry name" value="CSP"/>
    <property type="match status" value="1"/>
</dbReference>
<dbReference type="SMART" id="SM00955">
    <property type="entry name" value="RNB"/>
    <property type="match status" value="1"/>
</dbReference>
<dbReference type="SUPFAM" id="SSF50249">
    <property type="entry name" value="Nucleic acid-binding proteins"/>
    <property type="match status" value="4"/>
</dbReference>
<dbReference type="PROSITE" id="PS01175">
    <property type="entry name" value="RIBONUCLEASE_II"/>
    <property type="match status" value="1"/>
</dbReference>
<name>RNB_SALHS</name>
<evidence type="ECO:0000255" key="1"/>
<evidence type="ECO:0000255" key="2">
    <source>
        <dbReference type="HAMAP-Rule" id="MF_01036"/>
    </source>
</evidence>
<organism>
    <name type="scientific">Salmonella heidelberg (strain SL476)</name>
    <dbReference type="NCBI Taxonomy" id="454169"/>
    <lineage>
        <taxon>Bacteria</taxon>
        <taxon>Pseudomonadati</taxon>
        <taxon>Pseudomonadota</taxon>
        <taxon>Gammaproteobacteria</taxon>
        <taxon>Enterobacterales</taxon>
        <taxon>Enterobacteriaceae</taxon>
        <taxon>Salmonella</taxon>
    </lineage>
</organism>
<proteinExistence type="inferred from homology"/>